<dbReference type="EC" id="7.3.2.2" evidence="1"/>
<dbReference type="EMBL" id="CP000117">
    <property type="protein sequence ID" value="ABA19804.1"/>
    <property type="molecule type" value="Genomic_DNA"/>
</dbReference>
<dbReference type="SMR" id="Q3MGT2"/>
<dbReference type="STRING" id="240292.Ava_0178"/>
<dbReference type="KEGG" id="ava:Ava_0178"/>
<dbReference type="eggNOG" id="COG3638">
    <property type="taxonomic scope" value="Bacteria"/>
</dbReference>
<dbReference type="HOGENOM" id="CLU_000604_1_22_3"/>
<dbReference type="Proteomes" id="UP000002533">
    <property type="component" value="Chromosome"/>
</dbReference>
<dbReference type="GO" id="GO:0005886">
    <property type="term" value="C:plasma membrane"/>
    <property type="evidence" value="ECO:0007669"/>
    <property type="project" value="UniProtKB-SubCell"/>
</dbReference>
<dbReference type="GO" id="GO:0015416">
    <property type="term" value="F:ABC-type phosphonate transporter activity"/>
    <property type="evidence" value="ECO:0007669"/>
    <property type="project" value="UniProtKB-EC"/>
</dbReference>
<dbReference type="GO" id="GO:0005524">
    <property type="term" value="F:ATP binding"/>
    <property type="evidence" value="ECO:0007669"/>
    <property type="project" value="UniProtKB-KW"/>
</dbReference>
<dbReference type="GO" id="GO:0016887">
    <property type="term" value="F:ATP hydrolysis activity"/>
    <property type="evidence" value="ECO:0007669"/>
    <property type="project" value="InterPro"/>
</dbReference>
<dbReference type="CDD" id="cd03256">
    <property type="entry name" value="ABC_PhnC_transporter"/>
    <property type="match status" value="1"/>
</dbReference>
<dbReference type="Gene3D" id="3.40.50.300">
    <property type="entry name" value="P-loop containing nucleotide triphosphate hydrolases"/>
    <property type="match status" value="1"/>
</dbReference>
<dbReference type="InterPro" id="IPR003593">
    <property type="entry name" value="AAA+_ATPase"/>
</dbReference>
<dbReference type="InterPro" id="IPR003439">
    <property type="entry name" value="ABC_transporter-like_ATP-bd"/>
</dbReference>
<dbReference type="InterPro" id="IPR017871">
    <property type="entry name" value="ABC_transporter-like_CS"/>
</dbReference>
<dbReference type="InterPro" id="IPR015854">
    <property type="entry name" value="ABC_transpr_LolD-like"/>
</dbReference>
<dbReference type="InterPro" id="IPR012693">
    <property type="entry name" value="ABC_transpr_PhnC"/>
</dbReference>
<dbReference type="InterPro" id="IPR027417">
    <property type="entry name" value="P-loop_NTPase"/>
</dbReference>
<dbReference type="PANTHER" id="PTHR24220">
    <property type="entry name" value="IMPORT ATP-BINDING PROTEIN"/>
    <property type="match status" value="1"/>
</dbReference>
<dbReference type="Pfam" id="PF00005">
    <property type="entry name" value="ABC_tran"/>
    <property type="match status" value="1"/>
</dbReference>
<dbReference type="SMART" id="SM00382">
    <property type="entry name" value="AAA"/>
    <property type="match status" value="1"/>
</dbReference>
<dbReference type="SUPFAM" id="SSF52540">
    <property type="entry name" value="P-loop containing nucleoside triphosphate hydrolases"/>
    <property type="match status" value="1"/>
</dbReference>
<dbReference type="PROSITE" id="PS00211">
    <property type="entry name" value="ABC_TRANSPORTER_1"/>
    <property type="match status" value="1"/>
</dbReference>
<dbReference type="PROSITE" id="PS50893">
    <property type="entry name" value="ABC_TRANSPORTER_2"/>
    <property type="match status" value="1"/>
</dbReference>
<dbReference type="PROSITE" id="PS51249">
    <property type="entry name" value="PHNC"/>
    <property type="match status" value="1"/>
</dbReference>
<evidence type="ECO:0000255" key="1">
    <source>
        <dbReference type="HAMAP-Rule" id="MF_01713"/>
    </source>
</evidence>
<sequence>MSDYVIECHNLETAYVGSLNRPILNEISCHIKQGEFVVLLGLNGAGKSTLLRSLVGLVPLVKGEVHINGVAMNSRILPQIRRDVGMLFQGGGLIPQLSAIENVLCGRLGTRTTWQTLFGFPKRDRLLALELLEQLGLRELAYQRTSKLSGGQQQRVAIARALIQSPQILLADEPTTGLDVIATQQVMETLAELHTQQGMTVVAVLHDLGMAARYAQRAIVLDAGRIVYEGSCDNLQAQFVVNSQ</sequence>
<proteinExistence type="inferred from homology"/>
<keyword id="KW-0067">ATP-binding</keyword>
<keyword id="KW-0997">Cell inner membrane</keyword>
<keyword id="KW-1003">Cell membrane</keyword>
<keyword id="KW-0472">Membrane</keyword>
<keyword id="KW-0547">Nucleotide-binding</keyword>
<keyword id="KW-0918">Phosphonate transport</keyword>
<keyword id="KW-1278">Translocase</keyword>
<keyword id="KW-0813">Transport</keyword>
<gene>
    <name evidence="1" type="primary">phnC</name>
    <name type="ordered locus">Ava_0178</name>
</gene>
<protein>
    <recommendedName>
        <fullName evidence="1">Phosphonates import ATP-binding protein PhnC</fullName>
        <ecNumber evidence="1">7.3.2.2</ecNumber>
    </recommendedName>
</protein>
<reference key="1">
    <citation type="journal article" date="2014" name="Stand. Genomic Sci.">
        <title>Complete genome sequence of Anabaena variabilis ATCC 29413.</title>
        <authorList>
            <person name="Thiel T."/>
            <person name="Pratte B.S."/>
            <person name="Zhong J."/>
            <person name="Goodwin L."/>
            <person name="Copeland A."/>
            <person name="Lucas S."/>
            <person name="Han C."/>
            <person name="Pitluck S."/>
            <person name="Land M.L."/>
            <person name="Kyrpides N.C."/>
            <person name="Woyke T."/>
        </authorList>
    </citation>
    <scope>NUCLEOTIDE SEQUENCE [LARGE SCALE GENOMIC DNA]</scope>
    <source>
        <strain>ATCC 29413 / PCC 7937</strain>
    </source>
</reference>
<organism>
    <name type="scientific">Trichormus variabilis (strain ATCC 29413 / PCC 7937)</name>
    <name type="common">Anabaena variabilis</name>
    <dbReference type="NCBI Taxonomy" id="240292"/>
    <lineage>
        <taxon>Bacteria</taxon>
        <taxon>Bacillati</taxon>
        <taxon>Cyanobacteriota</taxon>
        <taxon>Cyanophyceae</taxon>
        <taxon>Nostocales</taxon>
        <taxon>Nostocaceae</taxon>
        <taxon>Trichormus</taxon>
    </lineage>
</organism>
<accession>Q3MGT2</accession>
<feature type="chain" id="PRO_0000274704" description="Phosphonates import ATP-binding protein PhnC">
    <location>
        <begin position="1"/>
        <end position="244"/>
    </location>
</feature>
<feature type="domain" description="ABC transporter" evidence="1">
    <location>
        <begin position="6"/>
        <end position="244"/>
    </location>
</feature>
<feature type="binding site" evidence="1">
    <location>
        <begin position="41"/>
        <end position="48"/>
    </location>
    <ligand>
        <name>ATP</name>
        <dbReference type="ChEBI" id="CHEBI:30616"/>
    </ligand>
</feature>
<name>PHNC_TRIV2</name>
<comment type="function">
    <text evidence="1">Part of the ABC transporter complex PhnCDE involved in phosphonates import. Responsible for energy coupling to the transport system.</text>
</comment>
<comment type="catalytic activity">
    <reaction evidence="1">
        <text>phosphonate(out) + ATP + H2O = phosphonate(in) + ADP + phosphate + H(+)</text>
        <dbReference type="Rhea" id="RHEA:18065"/>
        <dbReference type="ChEBI" id="CHEBI:15377"/>
        <dbReference type="ChEBI" id="CHEBI:15378"/>
        <dbReference type="ChEBI" id="CHEBI:16215"/>
        <dbReference type="ChEBI" id="CHEBI:30616"/>
        <dbReference type="ChEBI" id="CHEBI:43474"/>
        <dbReference type="ChEBI" id="CHEBI:456216"/>
        <dbReference type="EC" id="7.3.2.2"/>
    </reaction>
</comment>
<comment type="subunit">
    <text evidence="1">The complex is composed of two ATP-binding proteins (PhnC), two transmembrane proteins (PhnE) and a solute-binding protein (PhnD).</text>
</comment>
<comment type="subcellular location">
    <subcellularLocation>
        <location evidence="1">Cell inner membrane</location>
        <topology evidence="1">Peripheral membrane protein</topology>
    </subcellularLocation>
</comment>
<comment type="similarity">
    <text evidence="1">Belongs to the ABC transporter superfamily. Phosphonates importer (TC 3.A.1.9.1) family.</text>
</comment>